<reference key="1">
    <citation type="journal article" date="2004" name="Gene">
        <title>Identification and characterization of a novel gene family YPEL in a wide spectrum of eukaryotic species.</title>
        <authorList>
            <person name="Hosono K."/>
            <person name="Sasaki T."/>
            <person name="Minoshima S."/>
            <person name="Shimizu N."/>
        </authorList>
    </citation>
    <scope>NUCLEOTIDE SEQUENCE [GENOMIC DNA]</scope>
    <scope>SUBCELLULAR LOCATION</scope>
    <scope>TISSUE SPECIFICITY</scope>
</reference>
<reference key="2">
    <citation type="journal article" date="2004" name="Nat. Genet.">
        <title>Complete sequencing and characterization of 21,243 full-length human cDNAs.</title>
        <authorList>
            <person name="Ota T."/>
            <person name="Suzuki Y."/>
            <person name="Nishikawa T."/>
            <person name="Otsuki T."/>
            <person name="Sugiyama T."/>
            <person name="Irie R."/>
            <person name="Wakamatsu A."/>
            <person name="Hayashi K."/>
            <person name="Sato H."/>
            <person name="Nagai K."/>
            <person name="Kimura K."/>
            <person name="Makita H."/>
            <person name="Sekine M."/>
            <person name="Obayashi M."/>
            <person name="Nishi T."/>
            <person name="Shibahara T."/>
            <person name="Tanaka T."/>
            <person name="Ishii S."/>
            <person name="Yamamoto J."/>
            <person name="Saito K."/>
            <person name="Kawai Y."/>
            <person name="Isono Y."/>
            <person name="Nakamura Y."/>
            <person name="Nagahari K."/>
            <person name="Murakami K."/>
            <person name="Yasuda T."/>
            <person name="Iwayanagi T."/>
            <person name="Wagatsuma M."/>
            <person name="Shiratori A."/>
            <person name="Sudo H."/>
            <person name="Hosoiri T."/>
            <person name="Kaku Y."/>
            <person name="Kodaira H."/>
            <person name="Kondo H."/>
            <person name="Sugawara M."/>
            <person name="Takahashi M."/>
            <person name="Kanda K."/>
            <person name="Yokoi T."/>
            <person name="Furuya T."/>
            <person name="Kikkawa E."/>
            <person name="Omura Y."/>
            <person name="Abe K."/>
            <person name="Kamihara K."/>
            <person name="Katsuta N."/>
            <person name="Sato K."/>
            <person name="Tanikawa M."/>
            <person name="Yamazaki M."/>
            <person name="Ninomiya K."/>
            <person name="Ishibashi T."/>
            <person name="Yamashita H."/>
            <person name="Murakawa K."/>
            <person name="Fujimori K."/>
            <person name="Tanai H."/>
            <person name="Kimata M."/>
            <person name="Watanabe M."/>
            <person name="Hiraoka S."/>
            <person name="Chiba Y."/>
            <person name="Ishida S."/>
            <person name="Ono Y."/>
            <person name="Takiguchi S."/>
            <person name="Watanabe S."/>
            <person name="Yosida M."/>
            <person name="Hotuta T."/>
            <person name="Kusano J."/>
            <person name="Kanehori K."/>
            <person name="Takahashi-Fujii A."/>
            <person name="Hara H."/>
            <person name="Tanase T.-O."/>
            <person name="Nomura Y."/>
            <person name="Togiya S."/>
            <person name="Komai F."/>
            <person name="Hara R."/>
            <person name="Takeuchi K."/>
            <person name="Arita M."/>
            <person name="Imose N."/>
            <person name="Musashino K."/>
            <person name="Yuuki H."/>
            <person name="Oshima A."/>
            <person name="Sasaki N."/>
            <person name="Aotsuka S."/>
            <person name="Yoshikawa Y."/>
            <person name="Matsunawa H."/>
            <person name="Ichihara T."/>
            <person name="Shiohata N."/>
            <person name="Sano S."/>
            <person name="Moriya S."/>
            <person name="Momiyama H."/>
            <person name="Satoh N."/>
            <person name="Takami S."/>
            <person name="Terashima Y."/>
            <person name="Suzuki O."/>
            <person name="Nakagawa S."/>
            <person name="Senoh A."/>
            <person name="Mizoguchi H."/>
            <person name="Goto Y."/>
            <person name="Shimizu F."/>
            <person name="Wakebe H."/>
            <person name="Hishigaki H."/>
            <person name="Watanabe T."/>
            <person name="Sugiyama A."/>
            <person name="Takemoto M."/>
            <person name="Kawakami B."/>
            <person name="Yamazaki M."/>
            <person name="Watanabe K."/>
            <person name="Kumagai A."/>
            <person name="Itakura S."/>
            <person name="Fukuzumi Y."/>
            <person name="Fujimori Y."/>
            <person name="Komiyama M."/>
            <person name="Tashiro H."/>
            <person name="Tanigami A."/>
            <person name="Fujiwara T."/>
            <person name="Ono T."/>
            <person name="Yamada K."/>
            <person name="Fujii Y."/>
            <person name="Ozaki K."/>
            <person name="Hirao M."/>
            <person name="Ohmori Y."/>
            <person name="Kawabata A."/>
            <person name="Hikiji T."/>
            <person name="Kobatake N."/>
            <person name="Inagaki H."/>
            <person name="Ikema Y."/>
            <person name="Okamoto S."/>
            <person name="Okitani R."/>
            <person name="Kawakami T."/>
            <person name="Noguchi S."/>
            <person name="Itoh T."/>
            <person name="Shigeta K."/>
            <person name="Senba T."/>
            <person name="Matsumura K."/>
            <person name="Nakajima Y."/>
            <person name="Mizuno T."/>
            <person name="Morinaga M."/>
            <person name="Sasaki M."/>
            <person name="Togashi T."/>
            <person name="Oyama M."/>
            <person name="Hata H."/>
            <person name="Watanabe M."/>
            <person name="Komatsu T."/>
            <person name="Mizushima-Sugano J."/>
            <person name="Satoh T."/>
            <person name="Shirai Y."/>
            <person name="Takahashi Y."/>
            <person name="Nakagawa K."/>
            <person name="Okumura K."/>
            <person name="Nagase T."/>
            <person name="Nomura N."/>
            <person name="Kikuchi H."/>
            <person name="Masuho Y."/>
            <person name="Yamashita R."/>
            <person name="Nakai K."/>
            <person name="Yada T."/>
            <person name="Nakamura Y."/>
            <person name="Ohara O."/>
            <person name="Isogai T."/>
            <person name="Sugano S."/>
        </authorList>
    </citation>
    <scope>NUCLEOTIDE SEQUENCE [LARGE SCALE MRNA]</scope>
    <source>
        <tissue>Cerebellum</tissue>
    </source>
</reference>
<reference key="3">
    <citation type="submission" date="2005-07" db="EMBL/GenBank/DDBJ databases">
        <authorList>
            <person name="Mural R.J."/>
            <person name="Istrail S."/>
            <person name="Sutton G.G."/>
            <person name="Florea L."/>
            <person name="Halpern A.L."/>
            <person name="Mobarry C.M."/>
            <person name="Lippert R."/>
            <person name="Walenz B."/>
            <person name="Shatkay H."/>
            <person name="Dew I."/>
            <person name="Miller J.R."/>
            <person name="Flanigan M.J."/>
            <person name="Edwards N.J."/>
            <person name="Bolanos R."/>
            <person name="Fasulo D."/>
            <person name="Halldorsson B.V."/>
            <person name="Hannenhalli S."/>
            <person name="Turner R."/>
            <person name="Yooseph S."/>
            <person name="Lu F."/>
            <person name="Nusskern D.R."/>
            <person name="Shue B.C."/>
            <person name="Zheng X.H."/>
            <person name="Zhong F."/>
            <person name="Delcher A.L."/>
            <person name="Huson D.H."/>
            <person name="Kravitz S.A."/>
            <person name="Mouchard L."/>
            <person name="Reinert K."/>
            <person name="Remington K.A."/>
            <person name="Clark A.G."/>
            <person name="Waterman M.S."/>
            <person name="Eichler E.E."/>
            <person name="Adams M.D."/>
            <person name="Hunkapiller M.W."/>
            <person name="Myers E.W."/>
            <person name="Venter J.C."/>
        </authorList>
    </citation>
    <scope>NUCLEOTIDE SEQUENCE [LARGE SCALE GENOMIC DNA]</scope>
</reference>
<reference key="4">
    <citation type="journal article" date="2004" name="Genome Res.">
        <title>The status, quality, and expansion of the NIH full-length cDNA project: the Mammalian Gene Collection (MGC).</title>
        <authorList>
            <consortium name="The MGC Project Team"/>
        </authorList>
    </citation>
    <scope>NUCLEOTIDE SEQUENCE [LARGE SCALE MRNA]</scope>
    <source>
        <tissue>Brain</tissue>
    </source>
</reference>
<name>YPEL4_HUMAN</name>
<organism>
    <name type="scientific">Homo sapiens</name>
    <name type="common">Human</name>
    <dbReference type="NCBI Taxonomy" id="9606"/>
    <lineage>
        <taxon>Eukaryota</taxon>
        <taxon>Metazoa</taxon>
        <taxon>Chordata</taxon>
        <taxon>Craniata</taxon>
        <taxon>Vertebrata</taxon>
        <taxon>Euteleostomi</taxon>
        <taxon>Mammalia</taxon>
        <taxon>Eutheria</taxon>
        <taxon>Euarchontoglires</taxon>
        <taxon>Primates</taxon>
        <taxon>Haplorrhini</taxon>
        <taxon>Catarrhini</taxon>
        <taxon>Hominidae</taxon>
        <taxon>Homo</taxon>
    </lineage>
</organism>
<keyword id="KW-0479">Metal-binding</keyword>
<keyword id="KW-0539">Nucleus</keyword>
<keyword id="KW-0597">Phosphoprotein</keyword>
<keyword id="KW-1267">Proteomics identification</keyword>
<keyword id="KW-1185">Reference proteome</keyword>
<keyword id="KW-0862">Zinc</keyword>
<dbReference type="EMBL" id="AB098738">
    <property type="protein sequence ID" value="BAD51379.1"/>
    <property type="molecule type" value="Genomic_DNA"/>
</dbReference>
<dbReference type="EMBL" id="AK054775">
    <property type="protein sequence ID" value="BAB70805.1"/>
    <property type="molecule type" value="mRNA"/>
</dbReference>
<dbReference type="EMBL" id="AK124577">
    <property type="protein sequence ID" value="BAG54054.1"/>
    <property type="molecule type" value="mRNA"/>
</dbReference>
<dbReference type="EMBL" id="CH471076">
    <property type="protein sequence ID" value="EAW73765.1"/>
    <property type="molecule type" value="Genomic_DNA"/>
</dbReference>
<dbReference type="EMBL" id="BC104781">
    <property type="protein sequence ID" value="AAI04782.1"/>
    <property type="molecule type" value="mRNA"/>
</dbReference>
<dbReference type="EMBL" id="BC112119">
    <property type="protein sequence ID" value="AAI12120.1"/>
    <property type="molecule type" value="mRNA"/>
</dbReference>
<dbReference type="CCDS" id="CCDS7963.1"/>
<dbReference type="RefSeq" id="NP_001350416.1">
    <property type="nucleotide sequence ID" value="NM_001363487.2"/>
</dbReference>
<dbReference type="RefSeq" id="NP_659445.1">
    <property type="nucleotide sequence ID" value="NM_145008.3"/>
</dbReference>
<dbReference type="RefSeq" id="XP_016872807.1">
    <property type="nucleotide sequence ID" value="XM_017017318.1"/>
</dbReference>
<dbReference type="RefSeq" id="XP_047282487.1">
    <property type="nucleotide sequence ID" value="XM_047426531.1"/>
</dbReference>
<dbReference type="RefSeq" id="XP_054223953.1">
    <property type="nucleotide sequence ID" value="XM_054367978.1"/>
</dbReference>
<dbReference type="SMR" id="Q96NS1"/>
<dbReference type="BioGRID" id="128552">
    <property type="interactions" value="2"/>
</dbReference>
<dbReference type="FunCoup" id="Q96NS1">
    <property type="interactions" value="99"/>
</dbReference>
<dbReference type="STRING" id="9606.ENSP00000432648"/>
<dbReference type="iPTMnet" id="Q96NS1"/>
<dbReference type="PhosphoSitePlus" id="Q96NS1"/>
<dbReference type="BioMuta" id="YPEL4"/>
<dbReference type="DMDM" id="27805780"/>
<dbReference type="MassIVE" id="Q96NS1"/>
<dbReference type="PaxDb" id="9606-ENSP00000432648"/>
<dbReference type="PeptideAtlas" id="Q96NS1"/>
<dbReference type="ProteomicsDB" id="77550"/>
<dbReference type="Antibodypedia" id="65159">
    <property type="antibodies" value="24 antibodies from 14 providers"/>
</dbReference>
<dbReference type="DNASU" id="219539"/>
<dbReference type="Ensembl" id="ENST00000300022.8">
    <property type="protein sequence ID" value="ENSP00000300022.3"/>
    <property type="gene ID" value="ENSG00000166793.13"/>
</dbReference>
<dbReference type="Ensembl" id="ENST00000524669.5">
    <property type="protein sequence ID" value="ENSP00000432648.1"/>
    <property type="gene ID" value="ENSG00000166793.13"/>
</dbReference>
<dbReference type="Ensembl" id="ENST00000534711.5">
    <property type="protein sequence ID" value="ENSP00000432165.1"/>
    <property type="gene ID" value="ENSG00000166793.13"/>
</dbReference>
<dbReference type="GeneID" id="219539"/>
<dbReference type="KEGG" id="hsa:219539"/>
<dbReference type="MANE-Select" id="ENST00000300022.8">
    <property type="protein sequence ID" value="ENSP00000300022.3"/>
    <property type="RefSeq nucleotide sequence ID" value="NM_145008.3"/>
    <property type="RefSeq protein sequence ID" value="NP_659445.1"/>
</dbReference>
<dbReference type="UCSC" id="uc001nkv.5">
    <property type="organism name" value="human"/>
</dbReference>
<dbReference type="AGR" id="HGNC:18328"/>
<dbReference type="CTD" id="219539"/>
<dbReference type="DisGeNET" id="219539"/>
<dbReference type="GeneCards" id="YPEL4"/>
<dbReference type="HGNC" id="HGNC:18328">
    <property type="gene designation" value="YPEL4"/>
</dbReference>
<dbReference type="HPA" id="ENSG00000166793">
    <property type="expression patterns" value="Tissue enriched (brain)"/>
</dbReference>
<dbReference type="MIM" id="609725">
    <property type="type" value="gene"/>
</dbReference>
<dbReference type="neXtProt" id="NX_Q96NS1"/>
<dbReference type="OpenTargets" id="ENSG00000166793"/>
<dbReference type="PharmGKB" id="PA134991609"/>
<dbReference type="VEuPathDB" id="HostDB:ENSG00000166793"/>
<dbReference type="eggNOG" id="KOG3399">
    <property type="taxonomic scope" value="Eukaryota"/>
</dbReference>
<dbReference type="GeneTree" id="ENSGT00940000161443"/>
<dbReference type="HOGENOM" id="CLU_043857_5_2_1"/>
<dbReference type="InParanoid" id="Q96NS1"/>
<dbReference type="OMA" id="CCCGQII"/>
<dbReference type="OrthoDB" id="6407410at2759"/>
<dbReference type="PAN-GO" id="Q96NS1">
    <property type="GO annotations" value="0 GO annotations based on evolutionary models"/>
</dbReference>
<dbReference type="PhylomeDB" id="Q96NS1"/>
<dbReference type="TreeFam" id="TF313936"/>
<dbReference type="PathwayCommons" id="Q96NS1"/>
<dbReference type="BioGRID-ORCS" id="219539">
    <property type="hits" value="13 hits in 1153 CRISPR screens"/>
</dbReference>
<dbReference type="CD-CODE" id="8C2F96ED">
    <property type="entry name" value="Centrosome"/>
</dbReference>
<dbReference type="CD-CODE" id="91857CE7">
    <property type="entry name" value="Nucleolus"/>
</dbReference>
<dbReference type="ChiTaRS" id="YPEL4">
    <property type="organism name" value="human"/>
</dbReference>
<dbReference type="GenomeRNAi" id="219539"/>
<dbReference type="Pharos" id="Q96NS1">
    <property type="development level" value="Tdark"/>
</dbReference>
<dbReference type="PRO" id="PR:Q96NS1"/>
<dbReference type="Proteomes" id="UP000005640">
    <property type="component" value="Chromosome 11"/>
</dbReference>
<dbReference type="RNAct" id="Q96NS1">
    <property type="molecule type" value="protein"/>
</dbReference>
<dbReference type="Bgee" id="ENSG00000166793">
    <property type="expression patterns" value="Expressed in right hemisphere of cerebellum and 127 other cell types or tissues"/>
</dbReference>
<dbReference type="ExpressionAtlas" id="Q96NS1">
    <property type="expression patterns" value="baseline and differential"/>
</dbReference>
<dbReference type="GO" id="GO:0005730">
    <property type="term" value="C:nucleolus"/>
    <property type="evidence" value="ECO:0007669"/>
    <property type="project" value="UniProtKB-SubCell"/>
</dbReference>
<dbReference type="GO" id="GO:0046872">
    <property type="term" value="F:metal ion binding"/>
    <property type="evidence" value="ECO:0007669"/>
    <property type="project" value="UniProtKB-KW"/>
</dbReference>
<dbReference type="GO" id="GO:0034107">
    <property type="term" value="P:negative regulation of erythrocyte clearance"/>
    <property type="evidence" value="ECO:0007669"/>
    <property type="project" value="Ensembl"/>
</dbReference>
<dbReference type="GO" id="GO:0045647">
    <property type="term" value="P:negative regulation of erythrocyte differentiation"/>
    <property type="evidence" value="ECO:0007669"/>
    <property type="project" value="Ensembl"/>
</dbReference>
<dbReference type="GO" id="GO:0072659">
    <property type="term" value="P:protein localization to plasma membrane"/>
    <property type="evidence" value="ECO:0007669"/>
    <property type="project" value="Ensembl"/>
</dbReference>
<dbReference type="GO" id="GO:0008360">
    <property type="term" value="P:regulation of cell shape"/>
    <property type="evidence" value="ECO:0007669"/>
    <property type="project" value="Ensembl"/>
</dbReference>
<dbReference type="InterPro" id="IPR034751">
    <property type="entry name" value="Yippee"/>
</dbReference>
<dbReference type="InterPro" id="IPR004910">
    <property type="entry name" value="Yippee/Mis18/Cereblon"/>
</dbReference>
<dbReference type="InterPro" id="IPR039058">
    <property type="entry name" value="Yippee_fam"/>
</dbReference>
<dbReference type="PANTHER" id="PTHR13848">
    <property type="entry name" value="PROTEIN YIPPEE-LIKE CG15309-RELATED"/>
    <property type="match status" value="1"/>
</dbReference>
<dbReference type="Pfam" id="PF03226">
    <property type="entry name" value="Yippee-Mis18"/>
    <property type="match status" value="1"/>
</dbReference>
<dbReference type="PROSITE" id="PS51792">
    <property type="entry name" value="YIPPEE"/>
    <property type="match status" value="1"/>
</dbReference>
<proteinExistence type="evidence at protein level"/>
<comment type="subcellular location">
    <subcellularLocation>
        <location evidence="3">Nucleus</location>
        <location evidence="3">Nucleolus</location>
    </subcellularLocation>
</comment>
<comment type="tissue specificity">
    <text evidence="3">Widely expressed. Detected adult brain, lung, colon, small intestine and ovary, and in fetal brain, lung, liver and spleen.</text>
</comment>
<comment type="similarity">
    <text evidence="4">Belongs to the yippee family.</text>
</comment>
<evidence type="ECO:0000250" key="1">
    <source>
        <dbReference type="UniProtKB" id="Q5XID5"/>
    </source>
</evidence>
<evidence type="ECO:0000255" key="2">
    <source>
        <dbReference type="PROSITE-ProRule" id="PRU01128"/>
    </source>
</evidence>
<evidence type="ECO:0000269" key="3">
    <source>
    </source>
</evidence>
<evidence type="ECO:0000305" key="4"/>
<gene>
    <name type="primary">YPEL4</name>
</gene>
<sequence>MPSCDPGPGPACLPTKTFRSYLPRCHRTYSCVHCRAHLAKHDELISKSFQGSHGRAYLFNSVVNVGCGPAEQRLLLTGLHSVADIFCESCKTTLGWKYEQAFETSQKYKEGKYIIEMSHMVKDNGWD</sequence>
<feature type="chain" id="PRO_0000212392" description="Protein yippee-like 4">
    <location>
        <begin position="1"/>
        <end position="127"/>
    </location>
</feature>
<feature type="domain" description="Yippee" evidence="2">
    <location>
        <begin position="27"/>
        <end position="124"/>
    </location>
</feature>
<feature type="binding site" evidence="2">
    <location>
        <position position="31"/>
    </location>
    <ligand>
        <name>Zn(2+)</name>
        <dbReference type="ChEBI" id="CHEBI:29105"/>
    </ligand>
</feature>
<feature type="binding site" evidence="2">
    <location>
        <position position="34"/>
    </location>
    <ligand>
        <name>Zn(2+)</name>
        <dbReference type="ChEBI" id="CHEBI:29105"/>
    </ligand>
</feature>
<feature type="binding site" evidence="2">
    <location>
        <position position="87"/>
    </location>
    <ligand>
        <name>Zn(2+)</name>
        <dbReference type="ChEBI" id="CHEBI:29105"/>
    </ligand>
</feature>
<feature type="binding site" evidence="2">
    <location>
        <position position="90"/>
    </location>
    <ligand>
        <name>Zn(2+)</name>
        <dbReference type="ChEBI" id="CHEBI:29105"/>
    </ligand>
</feature>
<feature type="modified residue" description="Phosphothreonine" evidence="1">
    <location>
        <position position="92"/>
    </location>
</feature>
<feature type="modified residue" description="Phosphothreonine" evidence="1">
    <location>
        <position position="93"/>
    </location>
</feature>
<feature type="modified residue" description="Phosphotyrosine" evidence="1">
    <location>
        <position position="98"/>
    </location>
</feature>
<protein>
    <recommendedName>
        <fullName>Protein yippee-like 4</fullName>
    </recommendedName>
</protein>
<accession>Q96NS1</accession>
<accession>B3KW92</accession>
<accession>Q2M3U7</accession>
<accession>Q65Z98</accession>